<reference key="1">
    <citation type="journal article" date="2009" name="PLoS Biol.">
        <title>Lineage-specific biology revealed by a finished genome assembly of the mouse.</title>
        <authorList>
            <person name="Church D.M."/>
            <person name="Goodstadt L."/>
            <person name="Hillier L.W."/>
            <person name="Zody M.C."/>
            <person name="Goldstein S."/>
            <person name="She X."/>
            <person name="Bult C.J."/>
            <person name="Agarwala R."/>
            <person name="Cherry J.L."/>
            <person name="DiCuccio M."/>
            <person name="Hlavina W."/>
            <person name="Kapustin Y."/>
            <person name="Meric P."/>
            <person name="Maglott D."/>
            <person name="Birtle Z."/>
            <person name="Marques A.C."/>
            <person name="Graves T."/>
            <person name="Zhou S."/>
            <person name="Teague B."/>
            <person name="Potamousis K."/>
            <person name="Churas C."/>
            <person name="Place M."/>
            <person name="Herschleb J."/>
            <person name="Runnheim R."/>
            <person name="Forrest D."/>
            <person name="Amos-Landgraf J."/>
            <person name="Schwartz D.C."/>
            <person name="Cheng Z."/>
            <person name="Lindblad-Toh K."/>
            <person name="Eichler E.E."/>
            <person name="Ponting C.P."/>
        </authorList>
    </citation>
    <scope>NUCLEOTIDE SEQUENCE [LARGE SCALE GENOMIC DNA]</scope>
    <source>
        <strain>C57BL/6J</strain>
    </source>
</reference>
<reference key="2">
    <citation type="journal article" date="2010" name="Cell">
        <title>A tissue-specific atlas of mouse protein phosphorylation and expression.</title>
        <authorList>
            <person name="Huttlin E.L."/>
            <person name="Jedrychowski M.P."/>
            <person name="Elias J.E."/>
            <person name="Goswami T."/>
            <person name="Rad R."/>
            <person name="Beausoleil S.A."/>
            <person name="Villen J."/>
            <person name="Haas W."/>
            <person name="Sowa M.E."/>
            <person name="Gygi S.P."/>
        </authorList>
    </citation>
    <scope>IDENTIFICATION BY MASS SPECTROMETRY [LARGE SCALE ANALYSIS]</scope>
    <source>
        <tissue>Brain</tissue>
    </source>
</reference>
<reference key="3">
    <citation type="journal article" date="2011" name="J. Neurosci.">
        <title>IL-1 receptor accessory protein-like 1 associated with mental retardation and autism mediates synapse formation by trans-synaptic interaction with protein tyrosine phosphatase delta.</title>
        <authorList>
            <person name="Yoshida T."/>
            <person name="Yasumura M."/>
            <person name="Uemura T."/>
            <person name="Lee S.J."/>
            <person name="Ra M."/>
            <person name="Taguchi R."/>
            <person name="Iwakura Y."/>
            <person name="Mishina M."/>
        </authorList>
    </citation>
    <scope>FUNCTION</scope>
    <scope>INTERACTION WITH PTPRD</scope>
    <scope>SUBCELLULAR LOCATION</scope>
</reference>
<reference key="4">
    <citation type="journal article" date="2003" name="Hum. Mol. Genet.">
        <title>IL1 receptor accessory protein like, a protein involved in X-linked mental retardation, interacts with Neuronal Calcium Sensor-1 and regulates exocytosis.</title>
        <authorList>
            <person name="Bahi N."/>
            <person name="Friocourt G."/>
            <person name="Carrie A."/>
            <person name="Graham M.E."/>
            <person name="Weiss J.L."/>
            <person name="Chafey P."/>
            <person name="Fauchereau F."/>
            <person name="Burgoyne R.D."/>
            <person name="Chelly J."/>
        </authorList>
    </citation>
    <scope>TISSUE SPECIFICITY</scope>
</reference>
<reference evidence="12 13 14" key="5">
    <citation type="journal article" date="2015" name="Nat. Commun.">
        <title>Mechanisms of splicing-dependent trans-synaptic adhesion by PTPdelta-IL1RAPL1/IL-1RAcP for synaptic differentiation.</title>
        <authorList>
            <person name="Yamagata A."/>
            <person name="Yoshida T."/>
            <person name="Sato Y."/>
            <person name="Goto-Ito S."/>
            <person name="Uemura T."/>
            <person name="Maeda A."/>
            <person name="Shiroshima T."/>
            <person name="Iwasawa-Okamoto S."/>
            <person name="Mori H."/>
            <person name="Mishina M."/>
            <person name="Fukai S."/>
        </authorList>
    </citation>
    <scope>X-RAY CRYSTALLOGRAPHY (2.70 ANGSTROMS) OF 19-352 IN COMPLEX WITH PTPRD</scope>
    <scope>GLYCOSYLATION AT ASN-63; ASN-122; ASN-138; ASN-213 AND ASN-264</scope>
    <scope>DISULFIDE BONDS</scope>
    <scope>SUBUNIT</scope>
    <scope>INTERACTION WITH PTPRD</scope>
    <scope>MUTAGENESIS OF TRP-34; ASP-37; 75-MET--TYR-77; 88-PRO--PHE-91 AND ASP-292</scope>
    <scope>SITE</scope>
    <scope>FUNCTION</scope>
</reference>
<proteinExistence type="evidence at protein level"/>
<evidence type="ECO:0000250" key="1"/>
<evidence type="ECO:0000250" key="2">
    <source>
        <dbReference type="UniProtKB" id="P59824"/>
    </source>
</evidence>
<evidence type="ECO:0000250" key="3">
    <source>
        <dbReference type="UniProtKB" id="Q9NZN1"/>
    </source>
</evidence>
<evidence type="ECO:0000255" key="4"/>
<evidence type="ECO:0000255" key="5">
    <source>
        <dbReference type="PROSITE-ProRule" id="PRU00114"/>
    </source>
</evidence>
<evidence type="ECO:0000255" key="6">
    <source>
        <dbReference type="PROSITE-ProRule" id="PRU00204"/>
    </source>
</evidence>
<evidence type="ECO:0000256" key="7">
    <source>
        <dbReference type="SAM" id="MobiDB-lite"/>
    </source>
</evidence>
<evidence type="ECO:0000269" key="8">
    <source>
    </source>
</evidence>
<evidence type="ECO:0000269" key="9">
    <source>
    </source>
</evidence>
<evidence type="ECO:0000269" key="10">
    <source>
    </source>
</evidence>
<evidence type="ECO:0000305" key="11"/>
<evidence type="ECO:0007744" key="12">
    <source>
        <dbReference type="PDB" id="4YH6"/>
    </source>
</evidence>
<evidence type="ECO:0007744" key="13">
    <source>
        <dbReference type="PDB" id="4YH7"/>
    </source>
</evidence>
<evidence type="ECO:0007744" key="14">
    <source>
        <dbReference type="PDB" id="5Y32"/>
    </source>
</evidence>
<evidence type="ECO:0007829" key="15">
    <source>
        <dbReference type="PDB" id="4YH6"/>
    </source>
</evidence>
<evidence type="ECO:0007829" key="16">
    <source>
        <dbReference type="PDB" id="5Y32"/>
    </source>
</evidence>
<name>IRPL1_MOUSE</name>
<keyword id="KW-0002">3D-structure</keyword>
<keyword id="KW-1003">Cell membrane</keyword>
<keyword id="KW-0966">Cell projection</keyword>
<keyword id="KW-0963">Cytoplasm</keyword>
<keyword id="KW-1015">Disulfide bond</keyword>
<keyword id="KW-0325">Glycoprotein</keyword>
<keyword id="KW-0378">Hydrolase</keyword>
<keyword id="KW-0393">Immunoglobulin domain</keyword>
<keyword id="KW-0472">Membrane</keyword>
<keyword id="KW-0520">NAD</keyword>
<keyword id="KW-0675">Receptor</keyword>
<keyword id="KW-1185">Reference proteome</keyword>
<keyword id="KW-0677">Repeat</keyword>
<keyword id="KW-0732">Signal</keyword>
<keyword id="KW-0812">Transmembrane</keyword>
<keyword id="KW-1133">Transmembrane helix</keyword>
<gene>
    <name type="primary">Il1rapl1</name>
</gene>
<organism>
    <name type="scientific">Mus musculus</name>
    <name type="common">Mouse</name>
    <dbReference type="NCBI Taxonomy" id="10090"/>
    <lineage>
        <taxon>Eukaryota</taxon>
        <taxon>Metazoa</taxon>
        <taxon>Chordata</taxon>
        <taxon>Craniata</taxon>
        <taxon>Vertebrata</taxon>
        <taxon>Euteleostomi</taxon>
        <taxon>Mammalia</taxon>
        <taxon>Eutheria</taxon>
        <taxon>Euarchontoglires</taxon>
        <taxon>Glires</taxon>
        <taxon>Rodentia</taxon>
        <taxon>Myomorpha</taxon>
        <taxon>Muroidea</taxon>
        <taxon>Muridae</taxon>
        <taxon>Murinae</taxon>
        <taxon>Mus</taxon>
        <taxon>Mus</taxon>
    </lineage>
</organism>
<comment type="function">
    <text evidence="2 3 9 10">May regulate secretion and presynaptic differentiation through inhibition of the activity of N-type voltage-gated calcium channel. May activate the MAP kinase JNK (By similarity). Plays a role in neurite outgrowth (By similarity). During dendritic spine formation can bidirectionally induce pre- and post-synaptic differentiation of neurons by trans-synaptically binding to PTPRD (PubMed:21940441, PubMed:25908590).</text>
</comment>
<comment type="catalytic activity">
    <reaction evidence="6">
        <text>NAD(+) + H2O = ADP-D-ribose + nicotinamide + H(+)</text>
        <dbReference type="Rhea" id="RHEA:16301"/>
        <dbReference type="ChEBI" id="CHEBI:15377"/>
        <dbReference type="ChEBI" id="CHEBI:15378"/>
        <dbReference type="ChEBI" id="CHEBI:17154"/>
        <dbReference type="ChEBI" id="CHEBI:57540"/>
        <dbReference type="ChEBI" id="CHEBI:57967"/>
        <dbReference type="EC" id="3.2.2.6"/>
    </reaction>
    <physiologicalReaction direction="left-to-right" evidence="6">
        <dbReference type="Rhea" id="RHEA:16302"/>
    </physiologicalReaction>
</comment>
<comment type="subunit">
    <text evidence="3 9 10">Homodimer (PubMed:25908590). Interacts (calcium-independent) with NCS1/FREQ (By similarity). Interacts (via the first immunoglobilin domain) with PTPRD (via the second immunoglobilin domain); this interaction is PTPRD-splicing-dependent and induces pre- and post-synaptic differentiation of neurons and is required for IL1RAPL1-mediated synapse formation (PubMed:21940441, PubMed:25908590).</text>
</comment>
<comment type="interaction">
    <interactant intactId="EBI-5452114">
        <id>P59823</id>
    </interactant>
    <interactant intactId="EBI-771834">
        <id>Q64487</id>
        <label>Ptprd</label>
    </interactant>
    <organismsDiffer>false</organismsDiffer>
    <experiments>6</experiments>
</comment>
<comment type="subcellular location">
    <subcellularLocation>
        <location evidence="1">Cell membrane</location>
        <topology evidence="1">Single-pass type I membrane protein</topology>
    </subcellularLocation>
    <subcellularLocation>
        <location evidence="1">Cytoplasm</location>
    </subcellularLocation>
    <subcellularLocation>
        <location evidence="9">Cell projection</location>
        <location evidence="9">Axon</location>
    </subcellularLocation>
    <subcellularLocation>
        <location evidence="9">Cell projection</location>
        <location evidence="9">Dendrite</location>
    </subcellularLocation>
    <text>May localize to the cell body and growth cones of dendrite-like processes.</text>
</comment>
<comment type="tissue specificity">
    <text evidence="8">Detected in total brain extracts, olfactory bulb, hippocampus and striatum (at protein level).</text>
</comment>
<comment type="domain">
    <text evidence="6">The TIR domain mediates NAD(+) hydrolase (NADase) activity. Self-association of TIR domains is required for NADase activity.</text>
</comment>
<comment type="similarity">
    <text evidence="11">Belongs to the interleukin-1 receptor family.</text>
</comment>
<feature type="signal peptide" evidence="4">
    <location>
        <begin position="1"/>
        <end position="24"/>
    </location>
</feature>
<feature type="chain" id="PRO_0000015455" description="Interleukin-1 receptor accessory protein-like 1">
    <location>
        <begin position="25"/>
        <end position="695"/>
    </location>
</feature>
<feature type="topological domain" description="Extracellular" evidence="4">
    <location>
        <begin position="25"/>
        <end position="357"/>
    </location>
</feature>
<feature type="transmembrane region" description="Helical" evidence="4">
    <location>
        <begin position="358"/>
        <end position="378"/>
    </location>
</feature>
<feature type="topological domain" description="Cytoplasmic" evidence="4">
    <location>
        <begin position="379"/>
        <end position="695"/>
    </location>
</feature>
<feature type="domain" description="Ig-like C2-type 1">
    <location>
        <begin position="25"/>
        <end position="134"/>
    </location>
</feature>
<feature type="domain" description="Ig-like C2-type 2">
    <location>
        <begin position="143"/>
        <end position="232"/>
    </location>
</feature>
<feature type="domain" description="Ig-like C2-type 3">
    <location>
        <begin position="242"/>
        <end position="350"/>
    </location>
</feature>
<feature type="domain" description="TIR" evidence="6">
    <location>
        <begin position="403"/>
        <end position="558"/>
    </location>
</feature>
<feature type="region of interest" description="Interaction with NCS1" evidence="1">
    <location>
        <begin position="548"/>
        <end position="643"/>
    </location>
</feature>
<feature type="region of interest" description="Disordered" evidence="7">
    <location>
        <begin position="657"/>
        <end position="679"/>
    </location>
</feature>
<feature type="compositionally biased region" description="Basic and acidic residues" evidence="7">
    <location>
        <begin position="665"/>
        <end position="675"/>
    </location>
</feature>
<feature type="active site" evidence="6">
    <location>
        <position position="490"/>
    </location>
</feature>
<feature type="site" description="Essential for interaction with PTPRD" evidence="10">
    <location>
        <position position="34"/>
    </location>
</feature>
<feature type="glycosylation site" description="N-linked (GlcNAc...) asparagine" evidence="10 14">
    <location>
        <position position="63"/>
    </location>
</feature>
<feature type="glycosylation site" description="N-linked (GlcNAc...) asparagine" evidence="10 12 13 14">
    <location>
        <position position="122"/>
    </location>
</feature>
<feature type="glycosylation site" description="N-linked (GlcNAc...) asparagine" evidence="10 12 13 14">
    <location>
        <position position="138"/>
    </location>
</feature>
<feature type="glycosylation site" description="N-linked (GlcNAc...) asparagine" evidence="10 12 13 14">
    <location>
        <position position="213"/>
    </location>
</feature>
<feature type="glycosylation site" description="N-linked (GlcNAc...) asparagine" evidence="10 12 13 14">
    <location>
        <position position="264"/>
    </location>
</feature>
<feature type="glycosylation site" description="N-linked (GlcNAc...) asparagine" evidence="4">
    <location>
        <position position="331"/>
    </location>
</feature>
<feature type="disulfide bond" evidence="10 12 13 14">
    <location>
        <begin position="31"/>
        <end position="126"/>
    </location>
</feature>
<feature type="disulfide bond" evidence="5 10 12 13 14">
    <location>
        <begin position="53"/>
        <end position="118"/>
    </location>
</feature>
<feature type="disulfide bond" evidence="10 12 13 14">
    <location>
        <begin position="143"/>
        <end position="185"/>
    </location>
</feature>
<feature type="disulfide bond" evidence="5 10 12 13 14">
    <location>
        <begin position="164"/>
        <end position="216"/>
    </location>
</feature>
<feature type="disulfide bond" evidence="5 10 12 13 14">
    <location>
        <begin position="267"/>
        <end position="334"/>
    </location>
</feature>
<feature type="mutagenesis site" description="Abolishes Interaction with PTPRD. Abolishes synaptogenesis." evidence="10">
    <original>W</original>
    <variation>A</variation>
    <location>
        <position position="34"/>
    </location>
</feature>
<feature type="mutagenesis site" description="Decreases affinity for PTPRD. Significantly decreases synaptogenesis." evidence="10">
    <original>D</original>
    <variation>A</variation>
    <location>
        <position position="37"/>
    </location>
</feature>
<feature type="mutagenesis site" description="Decreases affinity for PTPRD; when associated with 88-A--A-91. Significantly decreases synaptogenesis; when associated with 88-A--A-91." evidence="10">
    <original>MWY</original>
    <variation>AWA</variation>
    <location>
        <begin position="75"/>
        <end position="77"/>
    </location>
</feature>
<feature type="mutagenesis site" description="Decreases affinity for PTPRD; when associated with 75-A--A-77. Significantly decreases synaptogenesis; when associated with 88-A--A-91." evidence="10">
    <original>PIAF</original>
    <variation>AIAA</variation>
    <location>
        <begin position="88"/>
        <end position="91"/>
    </location>
</feature>
<feature type="mutagenesis site" description="Decreases affinity for PTPRD. Significantly decreases synaptogenesis." evidence="10">
    <original>D</original>
    <variation>A</variation>
    <location>
        <position position="292"/>
    </location>
</feature>
<feature type="strand" evidence="16">
    <location>
        <begin position="32"/>
        <end position="36"/>
    </location>
</feature>
<feature type="strand" evidence="16">
    <location>
        <begin position="41"/>
        <end position="44"/>
    </location>
</feature>
<feature type="strand" evidence="16">
    <location>
        <begin position="49"/>
        <end position="52"/>
    </location>
</feature>
<feature type="helix" evidence="16">
    <location>
        <begin position="54"/>
        <end position="57"/>
    </location>
</feature>
<feature type="strand" evidence="16">
    <location>
        <begin position="60"/>
        <end position="62"/>
    </location>
</feature>
<feature type="helix" evidence="16">
    <location>
        <begin position="64"/>
        <end position="69"/>
    </location>
</feature>
<feature type="strand" evidence="16">
    <location>
        <begin position="73"/>
        <end position="81"/>
    </location>
</feature>
<feature type="strand" evidence="16">
    <location>
        <begin position="93"/>
        <end position="97"/>
    </location>
</feature>
<feature type="strand" evidence="16">
    <location>
        <begin position="102"/>
        <end position="107"/>
    </location>
</feature>
<feature type="helix" evidence="16">
    <location>
        <begin position="110"/>
        <end position="112"/>
    </location>
</feature>
<feature type="strand" evidence="16">
    <location>
        <begin position="114"/>
        <end position="121"/>
    </location>
</feature>
<feature type="strand" evidence="16">
    <location>
        <begin position="126"/>
        <end position="136"/>
    </location>
</feature>
<feature type="strand" evidence="16">
    <location>
        <begin position="142"/>
        <end position="145"/>
    </location>
</feature>
<feature type="strand" evidence="15">
    <location>
        <begin position="146"/>
        <end position="148"/>
    </location>
</feature>
<feature type="strand" evidence="16">
    <location>
        <begin position="150"/>
        <end position="155"/>
    </location>
</feature>
<feature type="strand" evidence="16">
    <location>
        <begin position="160"/>
        <end position="163"/>
    </location>
</feature>
<feature type="turn" evidence="16">
    <location>
        <begin position="168"/>
        <end position="170"/>
    </location>
</feature>
<feature type="strand" evidence="16">
    <location>
        <begin position="173"/>
        <end position="175"/>
    </location>
</feature>
<feature type="strand" evidence="16">
    <location>
        <begin position="180"/>
        <end position="183"/>
    </location>
</feature>
<feature type="strand" evidence="16">
    <location>
        <begin position="194"/>
        <end position="196"/>
    </location>
</feature>
<feature type="strand" evidence="16">
    <location>
        <begin position="198"/>
        <end position="205"/>
    </location>
</feature>
<feature type="helix" evidence="16">
    <location>
        <begin position="208"/>
        <end position="210"/>
    </location>
</feature>
<feature type="strand" evidence="16">
    <location>
        <begin position="212"/>
        <end position="220"/>
    </location>
</feature>
<feature type="strand" evidence="16">
    <location>
        <begin position="223"/>
        <end position="234"/>
    </location>
</feature>
<feature type="strand" evidence="16">
    <location>
        <begin position="243"/>
        <end position="247"/>
    </location>
</feature>
<feature type="strand" evidence="16">
    <location>
        <begin position="249"/>
        <end position="251"/>
    </location>
</feature>
<feature type="strand" evidence="16">
    <location>
        <begin position="253"/>
        <end position="257"/>
    </location>
</feature>
<feature type="strand" evidence="16">
    <location>
        <begin position="263"/>
        <end position="271"/>
    </location>
</feature>
<feature type="strand" evidence="16">
    <location>
        <begin position="280"/>
        <end position="285"/>
    </location>
</feature>
<feature type="strand" evidence="16">
    <location>
        <begin position="288"/>
        <end position="290"/>
    </location>
</feature>
<feature type="strand" evidence="16">
    <location>
        <begin position="296"/>
        <end position="300"/>
    </location>
</feature>
<feature type="strand" evidence="16">
    <location>
        <begin position="304"/>
        <end position="308"/>
    </location>
</feature>
<feature type="strand" evidence="16">
    <location>
        <begin position="313"/>
        <end position="323"/>
    </location>
</feature>
<feature type="turn" evidence="16">
    <location>
        <begin position="326"/>
        <end position="328"/>
    </location>
</feature>
<feature type="strand" evidence="16">
    <location>
        <begin position="330"/>
        <end position="338"/>
    </location>
</feature>
<feature type="strand" evidence="16">
    <location>
        <begin position="341"/>
        <end position="351"/>
    </location>
</feature>
<sequence>MKAPIPHLILLYATFTQSLKVVTKRGSADGCTDWSVDIKKYQVLVGEPVRIKCALFYGYIRTNYSLAQSAGLSLMWYKSSGPGDFEEPIAFDGSRMSKEEDSIWFRPTLLQDSGLYACVIRNSTYCMKVSISLTVGENDTGLCYNSKMKYFEKAELSKSKEISCRDIEDFLLPTREPEILWYKECRTKAWRPSIVFKRDTLLIKEVKEDDIGNYTCELKYGGFVVRRTTELTVTAPLTDKPPKLLYPMESKLTVQETQLGGSANLTCRAFFGYSGDVSPLIYWMKGEKFIEDLDENRVWESDIRILKEHLGEQEVSISLIVDSVEEGDLGNYSCYVENGNGRRHASVLLHKRELMYTVELAGGLGAILLLLICSVTIYKCYKIEIMLFYRNHFGAEELDGDNKDYDAYLSYTKVDPDQWNQETGEEERFALEILPDMLEKHYGYKLFIPDRDLIPTGNIEDVARCVDQSKRLIIVMTPNYVVRRGWSIFELETRLRNMLVTGEIKVILIECSELRGIMNYQEVEALKHTIKLLTVIKWHGPKCNKLNSKFWKRLQYEMPFKRIEPITHEQALDVSEQGPFGELQTVSAISMAAATSTALATAHPDLRSTFHNTYHSQMRQKHYYRSYEYDVPPTGTLPLTSIGNQHTYCNIPMTLINGQRPQTKSNREPNPDEAHTNSAILPLLPRETSISSVIW</sequence>
<accession>P59823</accession>
<protein>
    <recommendedName>
        <fullName>Interleukin-1 receptor accessory protein-like 1</fullName>
        <shortName>IL-1-RAPL-1</shortName>
        <shortName>IL-1RAPL-1</shortName>
        <shortName>IL1RAPL-1</shortName>
        <ecNumber evidence="6">3.2.2.6</ecNumber>
    </recommendedName>
    <alternativeName>
        <fullName>X-linked interleukin-1 receptor accessory protein-like 1</fullName>
    </alternativeName>
</protein>
<dbReference type="EC" id="3.2.2.6" evidence="6"/>
<dbReference type="EMBL" id="AL844900">
    <property type="status" value="NOT_ANNOTATED_CDS"/>
    <property type="molecule type" value="Genomic_DNA"/>
</dbReference>
<dbReference type="EMBL" id="AL672059">
    <property type="status" value="NOT_ANNOTATED_CDS"/>
    <property type="molecule type" value="Genomic_DNA"/>
</dbReference>
<dbReference type="EMBL" id="AK081272">
    <property type="status" value="NOT_ANNOTATED_CDS"/>
    <property type="molecule type" value="mRNA"/>
</dbReference>
<dbReference type="PDB" id="4YH6">
    <property type="method" value="X-ray"/>
    <property type="resolution" value="3.00 A"/>
    <property type="chains" value="A/B=19-352"/>
</dbReference>
<dbReference type="PDB" id="4YH7">
    <property type="method" value="X-ray"/>
    <property type="resolution" value="4.40 A"/>
    <property type="chains" value="B=19-352"/>
</dbReference>
<dbReference type="PDB" id="5Y32">
    <property type="method" value="X-ray"/>
    <property type="resolution" value="2.70 A"/>
    <property type="chains" value="B=19-352"/>
</dbReference>
<dbReference type="PDBsum" id="4YH6"/>
<dbReference type="PDBsum" id="4YH7"/>
<dbReference type="PDBsum" id="5Y32"/>
<dbReference type="SMR" id="P59823"/>
<dbReference type="FunCoup" id="P59823">
    <property type="interactions" value="110"/>
</dbReference>
<dbReference type="IntAct" id="P59823">
    <property type="interactions" value="1"/>
</dbReference>
<dbReference type="STRING" id="10090.ENSMUSP00000109599"/>
<dbReference type="GlyConnect" id="2411">
    <property type="glycosylation" value="4 N-Linked glycans (2 sites)"/>
</dbReference>
<dbReference type="GlyCosmos" id="P59823">
    <property type="glycosylation" value="6 sites, 4 glycans"/>
</dbReference>
<dbReference type="GlyGen" id="P59823">
    <property type="glycosylation" value="7 sites, 7 N-linked glycans (4 sites), 1 O-linked glycan (1 site)"/>
</dbReference>
<dbReference type="iPTMnet" id="P59823"/>
<dbReference type="PhosphoSitePlus" id="P59823"/>
<dbReference type="PaxDb" id="10090-ENSMUSP00000109599"/>
<dbReference type="ProteomicsDB" id="269097"/>
<dbReference type="AGR" id="MGI:2687319"/>
<dbReference type="MGI" id="MGI:2687319">
    <property type="gene designation" value="Il1rapl1"/>
</dbReference>
<dbReference type="eggNOG" id="KOG3971">
    <property type="taxonomic scope" value="Eukaryota"/>
</dbReference>
<dbReference type="InParanoid" id="P59823"/>
<dbReference type="Reactome" id="R-MMU-388844">
    <property type="pathway name" value="Receptor-type tyrosine-protein phosphatases"/>
</dbReference>
<dbReference type="Reactome" id="R-MMU-9007892">
    <property type="pathway name" value="Interleukin-38 signaling"/>
</dbReference>
<dbReference type="CD-CODE" id="CE726F99">
    <property type="entry name" value="Postsynaptic density"/>
</dbReference>
<dbReference type="ChiTaRS" id="Il1rapl1">
    <property type="organism name" value="mouse"/>
</dbReference>
<dbReference type="EvolutionaryTrace" id="P59823"/>
<dbReference type="PRO" id="PR:P59823"/>
<dbReference type="Proteomes" id="UP000000589">
    <property type="component" value="Unplaced"/>
</dbReference>
<dbReference type="RNAct" id="P59823">
    <property type="molecule type" value="protein"/>
</dbReference>
<dbReference type="GO" id="GO:0030424">
    <property type="term" value="C:axon"/>
    <property type="evidence" value="ECO:0007669"/>
    <property type="project" value="UniProtKB-SubCell"/>
</dbReference>
<dbReference type="GO" id="GO:0009986">
    <property type="term" value="C:cell surface"/>
    <property type="evidence" value="ECO:0000314"/>
    <property type="project" value="BHF-UCL"/>
</dbReference>
<dbReference type="GO" id="GO:0005737">
    <property type="term" value="C:cytoplasm"/>
    <property type="evidence" value="ECO:0007669"/>
    <property type="project" value="UniProtKB-SubCell"/>
</dbReference>
<dbReference type="GO" id="GO:0030425">
    <property type="term" value="C:dendrite"/>
    <property type="evidence" value="ECO:0000314"/>
    <property type="project" value="BHF-UCL"/>
</dbReference>
<dbReference type="GO" id="GO:0005886">
    <property type="term" value="C:plasma membrane"/>
    <property type="evidence" value="ECO:0000250"/>
    <property type="project" value="UniProtKB"/>
</dbReference>
<dbReference type="GO" id="GO:0045211">
    <property type="term" value="C:postsynaptic membrane"/>
    <property type="evidence" value="ECO:0000303"/>
    <property type="project" value="BHF-UCL"/>
</dbReference>
<dbReference type="GO" id="GO:0061809">
    <property type="term" value="F:NAD+ nucleosidase activity, cyclic ADP-ribose generating"/>
    <property type="evidence" value="ECO:0007669"/>
    <property type="project" value="UniProtKB-EC"/>
</dbReference>
<dbReference type="GO" id="GO:0005102">
    <property type="term" value="F:signaling receptor binding"/>
    <property type="evidence" value="ECO:0000353"/>
    <property type="project" value="BHF-UCL"/>
</dbReference>
<dbReference type="GO" id="GO:0007157">
    <property type="term" value="P:heterophilic cell-cell adhesion via plasma membrane cell adhesion molecules"/>
    <property type="evidence" value="ECO:0000314"/>
    <property type="project" value="CACAO"/>
</dbReference>
<dbReference type="GO" id="GO:0045920">
    <property type="term" value="P:negative regulation of exocytosis"/>
    <property type="evidence" value="ECO:0000250"/>
    <property type="project" value="UniProtKB"/>
</dbReference>
<dbReference type="GO" id="GO:0030182">
    <property type="term" value="P:neuron differentiation"/>
    <property type="evidence" value="ECO:0000314"/>
    <property type="project" value="BHF-UCL"/>
</dbReference>
<dbReference type="GO" id="GO:0050775">
    <property type="term" value="P:positive regulation of dendrite morphogenesis"/>
    <property type="evidence" value="ECO:0000315"/>
    <property type="project" value="CACAO"/>
</dbReference>
<dbReference type="GO" id="GO:0061003">
    <property type="term" value="P:positive regulation of dendritic spine morphogenesis"/>
    <property type="evidence" value="ECO:0000315"/>
    <property type="project" value="BHF-UCL"/>
</dbReference>
<dbReference type="GO" id="GO:0051965">
    <property type="term" value="P:positive regulation of synapse assembly"/>
    <property type="evidence" value="ECO:0000314"/>
    <property type="project" value="UniProtKB"/>
</dbReference>
<dbReference type="GO" id="GO:0097105">
    <property type="term" value="P:presynaptic membrane assembly"/>
    <property type="evidence" value="ECO:0000315"/>
    <property type="project" value="BHF-UCL"/>
</dbReference>
<dbReference type="GO" id="GO:0010975">
    <property type="term" value="P:regulation of neuron projection development"/>
    <property type="evidence" value="ECO:0000250"/>
    <property type="project" value="UniProtKB"/>
</dbReference>
<dbReference type="GO" id="GO:0007165">
    <property type="term" value="P:signal transduction"/>
    <property type="evidence" value="ECO:0007669"/>
    <property type="project" value="InterPro"/>
</dbReference>
<dbReference type="GO" id="GO:0099560">
    <property type="term" value="P:synaptic membrane adhesion"/>
    <property type="evidence" value="ECO:0000314"/>
    <property type="project" value="BHF-UCL"/>
</dbReference>
<dbReference type="CDD" id="cd00096">
    <property type="entry name" value="Ig"/>
    <property type="match status" value="1"/>
</dbReference>
<dbReference type="CDD" id="cd05896">
    <property type="entry name" value="Ig1_IL1RAPL-1_like"/>
    <property type="match status" value="1"/>
</dbReference>
<dbReference type="FunFam" id="2.60.40.10:FF:000188">
    <property type="entry name" value="Interleukin-1 receptor accessory protein-like 1"/>
    <property type="match status" value="1"/>
</dbReference>
<dbReference type="FunFam" id="2.60.40.10:FF:001486">
    <property type="entry name" value="Interleukin-1 receptor accessory protein-like 1"/>
    <property type="match status" value="1"/>
</dbReference>
<dbReference type="FunFam" id="2.60.40.10:FF:000220">
    <property type="entry name" value="X-linked interleukin-1 receptor accessory protein-like 1"/>
    <property type="match status" value="1"/>
</dbReference>
<dbReference type="FunFam" id="3.40.50.10140:FF:000004">
    <property type="entry name" value="X-linked interleukin-1 receptor accessory protein-like 1"/>
    <property type="match status" value="1"/>
</dbReference>
<dbReference type="Gene3D" id="2.60.40.10">
    <property type="entry name" value="Immunoglobulins"/>
    <property type="match status" value="3"/>
</dbReference>
<dbReference type="Gene3D" id="3.40.50.10140">
    <property type="entry name" value="Toll/interleukin-1 receptor homology (TIR) domain"/>
    <property type="match status" value="1"/>
</dbReference>
<dbReference type="InterPro" id="IPR007110">
    <property type="entry name" value="Ig-like_dom"/>
</dbReference>
<dbReference type="InterPro" id="IPR036179">
    <property type="entry name" value="Ig-like_dom_sf"/>
</dbReference>
<dbReference type="InterPro" id="IPR013783">
    <property type="entry name" value="Ig-like_fold"/>
</dbReference>
<dbReference type="InterPro" id="IPR003599">
    <property type="entry name" value="Ig_sub"/>
</dbReference>
<dbReference type="InterPro" id="IPR003598">
    <property type="entry name" value="Ig_sub2"/>
</dbReference>
<dbReference type="InterPro" id="IPR015621">
    <property type="entry name" value="IL-1_rcpt_fam"/>
</dbReference>
<dbReference type="InterPro" id="IPR041416">
    <property type="entry name" value="IL-1RAcP-like_ig"/>
</dbReference>
<dbReference type="InterPro" id="IPR013151">
    <property type="entry name" value="Immunoglobulin_dom"/>
</dbReference>
<dbReference type="InterPro" id="IPR000157">
    <property type="entry name" value="TIR_dom"/>
</dbReference>
<dbReference type="InterPro" id="IPR035897">
    <property type="entry name" value="Toll_tir_struct_dom_sf"/>
</dbReference>
<dbReference type="PANTHER" id="PTHR11890:SF22">
    <property type="entry name" value="INTERLEUKIN-1 RECEPTOR ACCESSORY PROTEIN-LIKE 1"/>
    <property type="match status" value="1"/>
</dbReference>
<dbReference type="PANTHER" id="PTHR11890">
    <property type="entry name" value="INTERLEUKIN-1 RECEPTOR FAMILY MEMBER"/>
    <property type="match status" value="1"/>
</dbReference>
<dbReference type="Pfam" id="PF00047">
    <property type="entry name" value="ig"/>
    <property type="match status" value="1"/>
</dbReference>
<dbReference type="Pfam" id="PF18452">
    <property type="entry name" value="Ig_6"/>
    <property type="match status" value="1"/>
</dbReference>
<dbReference type="Pfam" id="PF01582">
    <property type="entry name" value="TIR"/>
    <property type="match status" value="1"/>
</dbReference>
<dbReference type="PRINTS" id="PR01537">
    <property type="entry name" value="INTRLKN1R1F"/>
</dbReference>
<dbReference type="SMART" id="SM00409">
    <property type="entry name" value="IG"/>
    <property type="match status" value="3"/>
</dbReference>
<dbReference type="SMART" id="SM00408">
    <property type="entry name" value="IGc2"/>
    <property type="match status" value="2"/>
</dbReference>
<dbReference type="SMART" id="SM00255">
    <property type="entry name" value="TIR"/>
    <property type="match status" value="1"/>
</dbReference>
<dbReference type="SUPFAM" id="SSF48726">
    <property type="entry name" value="Immunoglobulin"/>
    <property type="match status" value="3"/>
</dbReference>
<dbReference type="SUPFAM" id="SSF52200">
    <property type="entry name" value="Toll/Interleukin receptor TIR domain"/>
    <property type="match status" value="1"/>
</dbReference>
<dbReference type="PROSITE" id="PS50835">
    <property type="entry name" value="IG_LIKE"/>
    <property type="match status" value="3"/>
</dbReference>
<dbReference type="PROSITE" id="PS50104">
    <property type="entry name" value="TIR"/>
    <property type="match status" value="1"/>
</dbReference>